<organism>
    <name type="scientific">Gongylus gongylodes</name>
    <name type="common">Wandering violin mantis</name>
    <dbReference type="NCBI Taxonomy" id="267100"/>
    <lineage>
        <taxon>Eukaryota</taxon>
        <taxon>Metazoa</taxon>
        <taxon>Ecdysozoa</taxon>
        <taxon>Arthropoda</taxon>
        <taxon>Hexapoda</taxon>
        <taxon>Insecta</taxon>
        <taxon>Pterygota</taxon>
        <taxon>Neoptera</taxon>
        <taxon>Polyneoptera</taxon>
        <taxon>Dictyoptera</taxon>
        <taxon>Mantodea</taxon>
        <taxon>Eumantodea</taxon>
        <taxon>Hymenopoidea</taxon>
        <taxon>Empusidae</taxon>
        <taxon>Empusinae</taxon>
        <taxon>Gongylus</taxon>
    </lineage>
</organism>
<feature type="peptide" id="PRO_0000395586" description="Periviscerokinin-2" evidence="4">
    <location>
        <begin position="1"/>
        <end position="11"/>
    </location>
</feature>
<feature type="modified residue" description="Leucine amide" evidence="4">
    <location>
        <position position="11"/>
    </location>
</feature>
<feature type="unsure residue" description="L or I" evidence="4">
    <location>
        <position position="5"/>
    </location>
</feature>
<feature type="unsure residue" description="I or L" evidence="4">
    <location>
        <position position="6"/>
    </location>
</feature>
<feature type="unsure residue" description="L or I" evidence="4">
    <location>
        <position position="11"/>
    </location>
</feature>
<sequence length="11" mass="1101">GASGLIAFPRL</sequence>
<accession>P86654</accession>
<dbReference type="GO" id="GO:0005576">
    <property type="term" value="C:extracellular region"/>
    <property type="evidence" value="ECO:0007669"/>
    <property type="project" value="UniProtKB-SubCell"/>
</dbReference>
<dbReference type="GO" id="GO:0007218">
    <property type="term" value="P:neuropeptide signaling pathway"/>
    <property type="evidence" value="ECO:0007669"/>
    <property type="project" value="UniProtKB-KW"/>
</dbReference>
<dbReference type="InterPro" id="IPR013231">
    <property type="entry name" value="Periviscerokinin"/>
</dbReference>
<dbReference type="Pfam" id="PF08259">
    <property type="entry name" value="Periviscerokin"/>
    <property type="match status" value="1"/>
</dbReference>
<keyword id="KW-0027">Amidation</keyword>
<keyword id="KW-0903">Direct protein sequencing</keyword>
<keyword id="KW-0527">Neuropeptide</keyword>
<keyword id="KW-0964">Secreted</keyword>
<comment type="function">
    <text evidence="1">Mediates visceral muscle contractile activity (myotropic activity).</text>
</comment>
<comment type="subcellular location">
    <subcellularLocation>
        <location evidence="2">Secreted</location>
    </subcellularLocation>
</comment>
<comment type="mass spectrometry" mass="1100.7" method="MALDI" evidence="4"/>
<comment type="similarity">
    <text evidence="3">Belongs to the periviscerokinin family.</text>
</comment>
<evidence type="ECO:0000250" key="1">
    <source>
        <dbReference type="UniProtKB" id="P83923"/>
    </source>
</evidence>
<evidence type="ECO:0000250" key="2">
    <source>
        <dbReference type="UniProtKB" id="P84375"/>
    </source>
</evidence>
<evidence type="ECO:0000255" key="3"/>
<evidence type="ECO:0000269" key="4">
    <source>
    </source>
</evidence>
<evidence type="ECO:0000303" key="5">
    <source>
    </source>
</evidence>
<evidence type="ECO:0000305" key="6"/>
<proteinExistence type="evidence at protein level"/>
<name>PVK2_GONGO</name>
<reference evidence="6" key="1">
    <citation type="journal article" date="2010" name="Peptides">
        <title>CAPA-peptides of praying mantids (Mantodea).</title>
        <authorList>
            <person name="Koehler R."/>
            <person name="Predel R."/>
        </authorList>
    </citation>
    <scope>PROTEIN SEQUENCE</scope>
    <scope>MASS SPECTROMETRY</scope>
    <scope>AMIDATION AT LEU-11</scope>
    <source>
        <tissue evidence="4">Abdominal perisympathetic organs</tissue>
    </source>
</reference>
<protein>
    <recommendedName>
        <fullName evidence="5">Periviscerokinin-2</fullName>
    </recommendedName>
</protein>